<sequence length="10" mass="1059">SHYAEGPGKN</sequence>
<dbReference type="PIR" id="S77990">
    <property type="entry name" value="S77990"/>
</dbReference>
<dbReference type="UniPathway" id="UPA00705"/>
<dbReference type="GO" id="GO:0005743">
    <property type="term" value="C:mitochondrial inner membrane"/>
    <property type="evidence" value="ECO:0007669"/>
    <property type="project" value="UniProtKB-SubCell"/>
</dbReference>
<dbReference type="GO" id="GO:0016491">
    <property type="term" value="F:oxidoreductase activity"/>
    <property type="evidence" value="ECO:0007669"/>
    <property type="project" value="UniProtKB-KW"/>
</dbReference>
<dbReference type="GO" id="GO:0006119">
    <property type="term" value="P:oxidative phosphorylation"/>
    <property type="evidence" value="ECO:0007669"/>
    <property type="project" value="UniProtKB-UniPathway"/>
</dbReference>
<protein>
    <recommendedName>
        <fullName>Cytochrome c oxidase polypeptide 7C, mitochondrial</fullName>
    </recommendedName>
    <alternativeName>
        <fullName>Cytochrome c oxidase polypeptide VIIc</fullName>
    </alternativeName>
</protein>
<feature type="chain" id="PRO_0000197046" description="Cytochrome c oxidase polypeptide 7C, mitochondrial">
    <location>
        <begin position="1"/>
        <end position="10" status="greater than"/>
    </location>
</feature>
<feature type="non-terminal residue">
    <location>
        <position position="10"/>
    </location>
</feature>
<comment type="function">
    <text evidence="2">Component of the cytochrome c oxidase, the last enzyme in the mitochondrial electron transport chain which drives oxidative phosphorylation. The respiratory chain contains 3 multisubunit complexes succinate dehydrogenase (complex II, CII), ubiquinol-cytochrome c oxidoreductase (cytochrome b-c1 complex, complex III, CIII) and cytochrome c oxidase (complex IV, CIV), that cooperate to transfer electrons derived from NADH and succinate to molecular oxygen, creating an electrochemical gradient over the inner membrane that drives transmembrane transport and the ATP synthase. Cytochrome c oxidase is the component of the respiratory chain that catalyzes the reduction of oxygen to water. Electrons originating from reduced cytochrome c in the intermembrane space (IMS) are transferred via the dinuclear copper A center (CU(A)) of subunit 2 and heme A of subunit 1 to the active site in subunit 1, a binuclear center (BNC) formed by heme A3 and copper B (CU(B)). The BNC reduces molecular oxygen to 2 water molecules using 4 electrons from cytochrome c in the IMS and 4 protons from the mitochondrial matrix.</text>
</comment>
<comment type="pathway">
    <text evidence="2">Energy metabolism; oxidative phosphorylation.</text>
</comment>
<comment type="subunit">
    <text evidence="1 3">Component of the cytochrome c oxidase (complex IV, CIV), a multisubunit enzyme composed of 14 subunits. The complex is composed of a catalytic core of 3 subunits MT-CO1, MT-CO2 and MT-CO3, encoded in the mitochondrial DNA, and 11 supernumerary subunits COX4I, COX5A, COX5B, COX6A, COX6B, COX6C, COX7A, COX7B, COX7C, COX8 and NDUFA4, which are encoded in the nuclear genome. The complex exists as a monomer or a dimer and forms supercomplexes (SCs) in the inner mitochondrial membrane with NADH-ubiquinone oxidoreductase (complex I, CI) and ubiquinol-cytochrome c oxidoreductase (cytochrome b-c1 complex, complex III, CIII), resulting in different assemblies (supercomplex SCI(1)III(2)IV(1) and megacomplex MCI(2)III(2)IV(2)) (By similarity). Interacts with RAB5IF (By similarity).</text>
</comment>
<comment type="subcellular location">
    <subcellularLocation>
        <location evidence="1">Mitochondrion inner membrane</location>
        <topology evidence="1">Single-pass membrane protein</topology>
    </subcellularLocation>
</comment>
<comment type="similarity">
    <text evidence="4">Belongs to the cytochrome c oxidase VIIc family.</text>
</comment>
<accession>P80982</accession>
<organism>
    <name type="scientific">Thunnus obesus</name>
    <name type="common">Bigeye tuna</name>
    <dbReference type="NCBI Taxonomy" id="8241"/>
    <lineage>
        <taxon>Eukaryota</taxon>
        <taxon>Metazoa</taxon>
        <taxon>Chordata</taxon>
        <taxon>Craniata</taxon>
        <taxon>Vertebrata</taxon>
        <taxon>Euteleostomi</taxon>
        <taxon>Actinopterygii</taxon>
        <taxon>Neopterygii</taxon>
        <taxon>Teleostei</taxon>
        <taxon>Neoteleostei</taxon>
        <taxon>Acanthomorphata</taxon>
        <taxon>Pelagiaria</taxon>
        <taxon>Scombriformes</taxon>
        <taxon>Scombridae</taxon>
        <taxon>Thunnus</taxon>
    </lineage>
</organism>
<proteinExistence type="evidence at protein level"/>
<evidence type="ECO:0000250" key="1">
    <source>
        <dbReference type="UniProtKB" id="P00430"/>
    </source>
</evidence>
<evidence type="ECO:0000250" key="2">
    <source>
        <dbReference type="UniProtKB" id="P04039"/>
    </source>
</evidence>
<evidence type="ECO:0000250" key="3">
    <source>
        <dbReference type="UniProtKB" id="P15954"/>
    </source>
</evidence>
<evidence type="ECO:0000305" key="4"/>
<keyword id="KW-0903">Direct protein sequencing</keyword>
<keyword id="KW-0472">Membrane</keyword>
<keyword id="KW-0496">Mitochondrion</keyword>
<keyword id="KW-0999">Mitochondrion inner membrane</keyword>
<keyword id="KW-0560">Oxidoreductase</keyword>
<name>COX7C_THUOB</name>
<reference key="1">
    <citation type="journal article" date="1997" name="Eur. J. Biochem.">
        <title>The subunit structure of cytochrome-c oxidase from tuna heart and liver.</title>
        <authorList>
            <person name="Arnold S."/>
            <person name="Lee I."/>
            <person name="Kim M."/>
            <person name="Song E."/>
            <person name="Linder D."/>
            <person name="Lottspeich F."/>
            <person name="Kadenbach B."/>
        </authorList>
    </citation>
    <scope>PROTEIN SEQUENCE</scope>
    <source>
        <tissue>Heart</tissue>
        <tissue>Liver</tissue>
    </source>
</reference>